<gene>
    <name evidence="7" type="primary">GNAT6</name>
    <name evidence="9" type="ordered locus">At2g06025</name>
    <name evidence="10" type="ORF">F5K7.26</name>
</gene>
<proteinExistence type="evidence at protein level"/>
<feature type="transit peptide" description="Chloroplast" evidence="4">
    <location>
        <begin position="1"/>
        <end position="111"/>
    </location>
</feature>
<feature type="chain" id="PRO_0000457955" description="GCN5-related N-acetyltransferase 6, chloroplastic">
    <location>
        <begin position="112"/>
        <end position="288"/>
    </location>
</feature>
<feature type="domain" description="N-acetyltransferase" evidence="5">
    <location>
        <begin position="151"/>
        <end position="288"/>
    </location>
</feature>
<feature type="active site" description="Proton donor" evidence="3">
    <location>
        <position position="261"/>
    </location>
</feature>
<feature type="binding site" evidence="3">
    <location>
        <begin position="215"/>
        <end position="217"/>
    </location>
    <ligand>
        <name>acetyl-CoA</name>
        <dbReference type="ChEBI" id="CHEBI:57288"/>
    </ligand>
</feature>
<feature type="binding site" evidence="3">
    <location>
        <begin position="223"/>
        <end position="228"/>
    </location>
    <ligand>
        <name>acetyl-CoA</name>
        <dbReference type="ChEBI" id="CHEBI:57288"/>
    </ligand>
</feature>
<feature type="binding site" evidence="3">
    <location>
        <begin position="254"/>
        <end position="256"/>
    </location>
    <ligand>
        <name>acetyl-CoA</name>
        <dbReference type="ChEBI" id="CHEBI:57288"/>
    </ligand>
</feature>
<feature type="binding site" evidence="3">
    <location>
        <position position="261"/>
    </location>
    <ligand>
        <name>acetyl-CoA</name>
        <dbReference type="ChEBI" id="CHEBI:57288"/>
    </ligand>
</feature>
<feature type="site" description="May have an important role in the acetylation of the polyamine" evidence="1">
    <location>
        <position position="261"/>
    </location>
</feature>
<accession>Q8GUT5</accession>
<sequence length="288" mass="33608">MSTISIHRTETLRITHARSRIFRQRYRRTIPLWKLTINSRSSDTSKKEELSVQISIPPQVDQSRPEGLRFDRLQPPEPEFGHEDRFEFGKFVAREAMLDEEYWTAAWLRAESHWEDRSNERYVDNYKRKFAEQEFNAIKRRCKGMQGQKCSCIVAVKKEEKHIKRSVIKSVVGTLDLSIRYFLQGETFPGEKVKSQLFCSINQEGSNRYGYIANLCVAKSARRQGIACNMLRFAVESARLSGVEQVYVHVHKNNSVAQELYQKTGFKIVETGKFESLDDDTYLLQYTS</sequence>
<keyword id="KW-0150">Chloroplast</keyword>
<keyword id="KW-0963">Cytoplasm</keyword>
<keyword id="KW-0934">Plastid</keyword>
<keyword id="KW-1185">Reference proteome</keyword>
<keyword id="KW-0808">Transferase</keyword>
<keyword id="KW-0809">Transit peptide</keyword>
<organism>
    <name type="scientific">Arabidopsis thaliana</name>
    <name type="common">Mouse-ear cress</name>
    <dbReference type="NCBI Taxonomy" id="3702"/>
    <lineage>
        <taxon>Eukaryota</taxon>
        <taxon>Viridiplantae</taxon>
        <taxon>Streptophyta</taxon>
        <taxon>Embryophyta</taxon>
        <taxon>Tracheophyta</taxon>
        <taxon>Spermatophyta</taxon>
        <taxon>Magnoliopsida</taxon>
        <taxon>eudicotyledons</taxon>
        <taxon>Gunneridae</taxon>
        <taxon>Pentapetalae</taxon>
        <taxon>rosids</taxon>
        <taxon>malvids</taxon>
        <taxon>Brassicales</taxon>
        <taxon>Brassicaceae</taxon>
        <taxon>Camelineae</taxon>
        <taxon>Arabidopsis</taxon>
    </lineage>
</organism>
<name>GNAT6_ARATH</name>
<evidence type="ECO:0000250" key="1">
    <source>
        <dbReference type="UniProtKB" id="P21340"/>
    </source>
</evidence>
<evidence type="ECO:0000250" key="2">
    <source>
        <dbReference type="UniProtKB" id="Q7X9V3"/>
    </source>
</evidence>
<evidence type="ECO:0000250" key="3">
    <source>
        <dbReference type="UniProtKB" id="Q96F10"/>
    </source>
</evidence>
<evidence type="ECO:0000255" key="4"/>
<evidence type="ECO:0000255" key="5">
    <source>
        <dbReference type="PROSITE-ProRule" id="PRU00532"/>
    </source>
</evidence>
<evidence type="ECO:0000269" key="6">
    <source>
    </source>
</evidence>
<evidence type="ECO:0000303" key="7">
    <source>
    </source>
</evidence>
<evidence type="ECO:0000305" key="8"/>
<evidence type="ECO:0000312" key="9">
    <source>
        <dbReference type="Araport" id="AT2G06025"/>
    </source>
</evidence>
<evidence type="ECO:0000312" key="10">
    <source>
        <dbReference type="EMBL" id="AEC05996.1"/>
    </source>
</evidence>
<reference key="1">
    <citation type="journal article" date="1999" name="Nature">
        <title>Sequence and analysis of chromosome 2 of the plant Arabidopsis thaliana.</title>
        <authorList>
            <person name="Lin X."/>
            <person name="Kaul S."/>
            <person name="Rounsley S.D."/>
            <person name="Shea T.P."/>
            <person name="Benito M.-I."/>
            <person name="Town C.D."/>
            <person name="Fujii C.Y."/>
            <person name="Mason T.M."/>
            <person name="Bowman C.L."/>
            <person name="Barnstead M.E."/>
            <person name="Feldblyum T.V."/>
            <person name="Buell C.R."/>
            <person name="Ketchum K.A."/>
            <person name="Lee J.J."/>
            <person name="Ronning C.M."/>
            <person name="Koo H.L."/>
            <person name="Moffat K.S."/>
            <person name="Cronin L.A."/>
            <person name="Shen M."/>
            <person name="Pai G."/>
            <person name="Van Aken S."/>
            <person name="Umayam L."/>
            <person name="Tallon L.J."/>
            <person name="Gill J.E."/>
            <person name="Adams M.D."/>
            <person name="Carrera A.J."/>
            <person name="Creasy T.H."/>
            <person name="Goodman H.M."/>
            <person name="Somerville C.R."/>
            <person name="Copenhaver G.P."/>
            <person name="Preuss D."/>
            <person name="Nierman W.C."/>
            <person name="White O."/>
            <person name="Eisen J.A."/>
            <person name="Salzberg S.L."/>
            <person name="Fraser C.M."/>
            <person name="Venter J.C."/>
        </authorList>
    </citation>
    <scope>NUCLEOTIDE SEQUENCE [LARGE SCALE GENOMIC DNA]</scope>
    <source>
        <strain>cv. Columbia</strain>
    </source>
</reference>
<reference key="2">
    <citation type="journal article" date="2017" name="Plant J.">
        <title>Araport11: a complete reannotation of the Arabidopsis thaliana reference genome.</title>
        <authorList>
            <person name="Cheng C.Y."/>
            <person name="Krishnakumar V."/>
            <person name="Chan A.P."/>
            <person name="Thibaud-Nissen F."/>
            <person name="Schobel S."/>
            <person name="Town C.D."/>
        </authorList>
    </citation>
    <scope>GENOME REANNOTATION</scope>
    <source>
        <strain>cv. Columbia</strain>
    </source>
</reference>
<reference key="3">
    <citation type="journal article" date="2002" name="Plant Physiol.">
        <title>Cloning and sequencing of cDNAs for hypothetical genes from chromosome 2 of Arabidopsis.</title>
        <authorList>
            <person name="Xiao Y.-L."/>
            <person name="Malik M."/>
            <person name="Whitelaw C.A."/>
            <person name="Town C.D."/>
        </authorList>
    </citation>
    <scope>NUCLEOTIDE SEQUENCE [LARGE SCALE MRNA]</scope>
    <source>
        <strain>cv. Columbia</strain>
    </source>
</reference>
<reference key="4">
    <citation type="submission" date="2005-03" db="EMBL/GenBank/DDBJ databases">
        <title>Large-scale analysis of RIKEN Arabidopsis full-length (RAFL) cDNAs.</title>
        <authorList>
            <person name="Totoki Y."/>
            <person name="Seki M."/>
            <person name="Ishida J."/>
            <person name="Nakajima M."/>
            <person name="Enju A."/>
            <person name="Kamiya A."/>
            <person name="Narusaka M."/>
            <person name="Shin-i T."/>
            <person name="Nakagawa M."/>
            <person name="Sakamoto N."/>
            <person name="Oishi K."/>
            <person name="Kohara Y."/>
            <person name="Kobayashi M."/>
            <person name="Toyoda A."/>
            <person name="Sakaki Y."/>
            <person name="Sakurai T."/>
            <person name="Iida K."/>
            <person name="Akiyama K."/>
            <person name="Satou M."/>
            <person name="Toyoda T."/>
            <person name="Konagaya A."/>
            <person name="Carninci P."/>
            <person name="Kawai J."/>
            <person name="Hayashizaki Y."/>
            <person name="Shinozaki K."/>
        </authorList>
    </citation>
    <scope>NUCLEOTIDE SEQUENCE [LARGE SCALE MRNA]</scope>
    <source>
        <strain>cv. Columbia</strain>
    </source>
</reference>
<reference key="5">
    <citation type="submission" date="2005-03" db="EMBL/GenBank/DDBJ databases">
        <authorList>
            <person name="Underwood B.A."/>
            <person name="Xiao Y.-L."/>
            <person name="Moskal W.A. Jr."/>
            <person name="Monaghan E.L."/>
            <person name="Wang W."/>
            <person name="Redman J.C."/>
            <person name="Wu H.C."/>
            <person name="Utterback T."/>
            <person name="Town C.D."/>
        </authorList>
    </citation>
    <scope>NUCLEOTIDE SEQUENCE [LARGE SCALE MRNA]</scope>
    <source>
        <strain>cv. Columbia</strain>
    </source>
</reference>
<reference key="6">
    <citation type="journal article" date="2020" name="Mol. Syst. Biol.">
        <title>Dual lysine and N-terminal acetyltransferases reveal the complexity underpinning protein acetylation.</title>
        <authorList>
            <person name="Bienvenut W.V."/>
            <person name="Bruenje A."/>
            <person name="Boyer J.-B."/>
            <person name="Muehlenbeck J.S."/>
            <person name="Bernal G."/>
            <person name="Lassowskat I."/>
            <person name="Dian C."/>
            <person name="Linster E."/>
            <person name="Dinh T.V."/>
            <person name="Koskela M.M."/>
            <person name="Jung V."/>
            <person name="Seidel J."/>
            <person name="Schyrba L.K."/>
            <person name="Ivanauskaite A."/>
            <person name="Eirich J."/>
            <person name="Hell R."/>
            <person name="Schwarzer D."/>
            <person name="Mulo P."/>
            <person name="Wirtz M."/>
            <person name="Meinnel T."/>
            <person name="Giglione C."/>
            <person name="Finkemeier I."/>
        </authorList>
    </citation>
    <scope>FUNCTION</scope>
    <scope>CATALYTIC ACTIVITY</scope>
    <scope>SUBCELLULAR LOCATION</scope>
    <scope>TISSUE SPECIFICITY</scope>
    <scope>AUTOACETYLATION</scope>
    <scope>GENE FAMILY</scope>
    <scope>NOMENCLATURE</scope>
    <source>
        <strain>cv. Columbia</strain>
    </source>
</reference>
<comment type="function">
    <text evidence="6">Protein acetyltransferase with dual specificity triggering both N-alpha-acetylation (NTA), with a large spectrum of modified N-termini, including methionine, alanine, serine, threonine and to a lower extent valine as substrates, and epsilon-lysine acetylation (KA).</text>
</comment>
<comment type="catalytic activity">
    <reaction evidence="6">
        <text>an N-terminal L-alpha-aminoacyl-[protein] + acetyl-CoA = N-terminal N(alpha)-acetyl-L-alpha-aminoacyl-[protein] + CoA + H(+)</text>
        <dbReference type="Rhea" id="RHEA:21028"/>
        <dbReference type="Rhea" id="RHEA-COMP:10636"/>
        <dbReference type="Rhea" id="RHEA-COMP:15589"/>
        <dbReference type="ChEBI" id="CHEBI:15378"/>
        <dbReference type="ChEBI" id="CHEBI:57287"/>
        <dbReference type="ChEBI" id="CHEBI:57288"/>
        <dbReference type="ChEBI" id="CHEBI:78597"/>
        <dbReference type="ChEBI" id="CHEBI:78598"/>
    </reaction>
</comment>
<comment type="catalytic activity">
    <reaction evidence="6">
        <text>L-lysyl-[protein] + acetyl-CoA = N(6)-acetyl-L-lysyl-[protein] + CoA + H(+)</text>
        <dbReference type="Rhea" id="RHEA:45948"/>
        <dbReference type="Rhea" id="RHEA-COMP:9752"/>
        <dbReference type="Rhea" id="RHEA-COMP:10731"/>
        <dbReference type="ChEBI" id="CHEBI:15378"/>
        <dbReference type="ChEBI" id="CHEBI:29969"/>
        <dbReference type="ChEBI" id="CHEBI:57287"/>
        <dbReference type="ChEBI" id="CHEBI:57288"/>
        <dbReference type="ChEBI" id="CHEBI:61930"/>
        <dbReference type="EC" id="2.3.1.48"/>
    </reaction>
</comment>
<comment type="catalytic activity">
    <reaction evidence="6">
        <text>N-terminal L-alanyl-[protein] + acetyl-CoA = N-terminal N(alpha)-acetyl-L-alanyl-[protein] + CoA + H(+)</text>
        <dbReference type="Rhea" id="RHEA:50500"/>
        <dbReference type="Rhea" id="RHEA-COMP:12701"/>
        <dbReference type="Rhea" id="RHEA-COMP:12702"/>
        <dbReference type="ChEBI" id="CHEBI:15378"/>
        <dbReference type="ChEBI" id="CHEBI:57287"/>
        <dbReference type="ChEBI" id="CHEBI:57288"/>
        <dbReference type="ChEBI" id="CHEBI:64718"/>
        <dbReference type="ChEBI" id="CHEBI:83683"/>
        <dbReference type="EC" id="2.3.1.255"/>
    </reaction>
</comment>
<comment type="catalytic activity">
    <reaction evidence="6">
        <text>N-terminal L-seryl-[protein] + acetyl-CoA = N-terminal N(alpha)-acetyl-L-seryl-[protein] + CoA + H(+)</text>
        <dbReference type="Rhea" id="RHEA:50504"/>
        <dbReference type="Rhea" id="RHEA-COMP:12703"/>
        <dbReference type="Rhea" id="RHEA-COMP:12704"/>
        <dbReference type="ChEBI" id="CHEBI:15378"/>
        <dbReference type="ChEBI" id="CHEBI:57287"/>
        <dbReference type="ChEBI" id="CHEBI:57288"/>
        <dbReference type="ChEBI" id="CHEBI:64738"/>
        <dbReference type="ChEBI" id="CHEBI:83690"/>
        <dbReference type="EC" id="2.3.1.255"/>
    </reaction>
</comment>
<comment type="catalytic activity">
    <reaction evidence="6">
        <text>N-terminal L-threonyl-[protein] + acetyl-CoA = N-terminal N(alpha)-acetyl-L-threonyl-[protein] + CoA + H(+)</text>
        <dbReference type="Rhea" id="RHEA:50516"/>
        <dbReference type="Rhea" id="RHEA-COMP:12709"/>
        <dbReference type="Rhea" id="RHEA-COMP:12710"/>
        <dbReference type="ChEBI" id="CHEBI:15378"/>
        <dbReference type="ChEBI" id="CHEBI:57287"/>
        <dbReference type="ChEBI" id="CHEBI:57288"/>
        <dbReference type="ChEBI" id="CHEBI:64739"/>
        <dbReference type="ChEBI" id="CHEBI:133375"/>
        <dbReference type="EC" id="2.3.1.255"/>
    </reaction>
</comment>
<comment type="catalytic activity">
    <reaction evidence="6">
        <text>N-terminal L-methionyl-[protein] + acetyl-CoA = N-terminal N(alpha)-acetyl-L-methionyl-[protein] + CoA + H(+)</text>
        <dbReference type="Rhea" id="RHEA:75239"/>
        <dbReference type="Rhea" id="RHEA-COMP:18493"/>
        <dbReference type="Rhea" id="RHEA-COMP:18494"/>
        <dbReference type="ChEBI" id="CHEBI:15378"/>
        <dbReference type="ChEBI" id="CHEBI:57287"/>
        <dbReference type="ChEBI" id="CHEBI:57288"/>
        <dbReference type="ChEBI" id="CHEBI:64731"/>
        <dbReference type="ChEBI" id="CHEBI:133414"/>
    </reaction>
</comment>
<comment type="catalytic activity">
    <reaction evidence="6">
        <text>N-terminal L-valyl-[protein] + acetyl-CoA = N-terminal N(alpha)-acetyl-L-valyl-[protein] + CoA + H(+)</text>
        <dbReference type="Rhea" id="RHEA:50508"/>
        <dbReference type="Rhea" id="RHEA-COMP:12705"/>
        <dbReference type="Rhea" id="RHEA-COMP:12706"/>
        <dbReference type="ChEBI" id="CHEBI:15378"/>
        <dbReference type="ChEBI" id="CHEBI:57287"/>
        <dbReference type="ChEBI" id="CHEBI:57288"/>
        <dbReference type="ChEBI" id="CHEBI:64741"/>
        <dbReference type="ChEBI" id="CHEBI:133371"/>
        <dbReference type="EC" id="2.3.1.255"/>
    </reaction>
</comment>
<comment type="subunit">
    <text evidence="2">Oligomer.</text>
</comment>
<comment type="subcellular location">
    <subcellularLocation>
        <location evidence="6">Plastid</location>
        <location evidence="6">Chloroplast</location>
    </subcellularLocation>
    <subcellularLocation>
        <location evidence="6">Cytoplasm</location>
        <location evidence="6">Perinuclear region</location>
    </subcellularLocation>
    <text evidence="6">Spotted pattern, either associated with chloroplasts or confined within the nuclear envelope.</text>
</comment>
<comment type="tissue specificity">
    <text evidence="6">Expressed in green tissues and in roots.</text>
</comment>
<comment type="PTM">
    <text evidence="6">Autoacetylated.</text>
</comment>
<comment type="similarity">
    <text evidence="8">Belongs to the acetyltransferase family. GNAT subfamily.</text>
</comment>
<protein>
    <recommendedName>
        <fullName evidence="7">GCN5-related N-acetyltransferase 6, chloroplastic</fullName>
        <ecNumber evidence="5 6">2.3.1.255</ecNumber>
        <ecNumber evidence="5 6">2.3.1.48</ecNumber>
    </recommendedName>
</protein>
<dbReference type="EC" id="2.3.1.255" evidence="5 6"/>
<dbReference type="EC" id="2.3.1.48" evidence="5 6"/>
<dbReference type="EMBL" id="AC006413">
    <property type="status" value="NOT_ANNOTATED_CDS"/>
    <property type="molecule type" value="Genomic_DNA"/>
</dbReference>
<dbReference type="EMBL" id="CP002685">
    <property type="protein sequence ID" value="AEC05996.1"/>
    <property type="molecule type" value="Genomic_DNA"/>
</dbReference>
<dbReference type="EMBL" id="CP002685">
    <property type="protein sequence ID" value="ANM62099.1"/>
    <property type="molecule type" value="Genomic_DNA"/>
</dbReference>
<dbReference type="EMBL" id="CP002685">
    <property type="protein sequence ID" value="ANM62102.1"/>
    <property type="molecule type" value="Genomic_DNA"/>
</dbReference>
<dbReference type="EMBL" id="AY168995">
    <property type="protein sequence ID" value="AAO11666.1"/>
    <property type="molecule type" value="mRNA"/>
</dbReference>
<dbReference type="EMBL" id="AK220702">
    <property type="protein sequence ID" value="BAD93799.1"/>
    <property type="molecule type" value="mRNA"/>
</dbReference>
<dbReference type="EMBL" id="AY954783">
    <property type="protein sequence ID" value="AAX55109.1"/>
    <property type="molecule type" value="mRNA"/>
</dbReference>
<dbReference type="RefSeq" id="NP_001318205.1">
    <property type="nucleotide sequence ID" value="NM_001335294.1"/>
</dbReference>
<dbReference type="RefSeq" id="NP_001324281.1">
    <property type="nucleotide sequence ID" value="NM_001335298.1"/>
</dbReference>
<dbReference type="RefSeq" id="NP_671784.2">
    <property type="nucleotide sequence ID" value="NM_147251.3"/>
</dbReference>
<dbReference type="SMR" id="Q8GUT5"/>
<dbReference type="FunCoup" id="Q8GUT5">
    <property type="interactions" value="675"/>
</dbReference>
<dbReference type="STRING" id="3702.Q8GUT5"/>
<dbReference type="PaxDb" id="3702-AT2G06025.1"/>
<dbReference type="ProteomicsDB" id="181677"/>
<dbReference type="EnsemblPlants" id="AT2G06025.1">
    <property type="protein sequence ID" value="AT2G06025.1"/>
    <property type="gene ID" value="AT2G06025"/>
</dbReference>
<dbReference type="EnsemblPlants" id="AT2G06025.4">
    <property type="protein sequence ID" value="AT2G06025.4"/>
    <property type="gene ID" value="AT2G06025"/>
</dbReference>
<dbReference type="EnsemblPlants" id="AT2G06025.6">
    <property type="protein sequence ID" value="AT2G06025.6"/>
    <property type="gene ID" value="AT2G06025"/>
</dbReference>
<dbReference type="GeneID" id="815157"/>
<dbReference type="Gramene" id="AT2G06025.1">
    <property type="protein sequence ID" value="AT2G06025.1"/>
    <property type="gene ID" value="AT2G06025"/>
</dbReference>
<dbReference type="Gramene" id="AT2G06025.4">
    <property type="protein sequence ID" value="AT2G06025.4"/>
    <property type="gene ID" value="AT2G06025"/>
</dbReference>
<dbReference type="Gramene" id="AT2G06025.6">
    <property type="protein sequence ID" value="AT2G06025.6"/>
    <property type="gene ID" value="AT2G06025"/>
</dbReference>
<dbReference type="KEGG" id="ath:AT2G06025"/>
<dbReference type="Araport" id="AT2G06025"/>
<dbReference type="TAIR" id="AT2G06025"/>
<dbReference type="eggNOG" id="ENOG502QREC">
    <property type="taxonomic scope" value="Eukaryota"/>
</dbReference>
<dbReference type="HOGENOM" id="CLU_056265_1_0_1"/>
<dbReference type="InParanoid" id="Q8GUT5"/>
<dbReference type="OMA" id="CSCIITV"/>
<dbReference type="PRO" id="PR:Q8GUT5"/>
<dbReference type="Proteomes" id="UP000006548">
    <property type="component" value="Chromosome 2"/>
</dbReference>
<dbReference type="ExpressionAtlas" id="Q8GUT5">
    <property type="expression patterns" value="baseline and differential"/>
</dbReference>
<dbReference type="GO" id="GO:0009507">
    <property type="term" value="C:chloroplast"/>
    <property type="evidence" value="ECO:0007669"/>
    <property type="project" value="UniProtKB-SubCell"/>
</dbReference>
<dbReference type="GO" id="GO:0048471">
    <property type="term" value="C:perinuclear region of cytoplasm"/>
    <property type="evidence" value="ECO:0007669"/>
    <property type="project" value="UniProtKB-SubCell"/>
</dbReference>
<dbReference type="GO" id="GO:0008080">
    <property type="term" value="F:N-acetyltransferase activity"/>
    <property type="evidence" value="ECO:0000314"/>
    <property type="project" value="UniProtKB"/>
</dbReference>
<dbReference type="GO" id="GO:0006474">
    <property type="term" value="P:N-terminal protein amino acid acetylation"/>
    <property type="evidence" value="ECO:0000314"/>
    <property type="project" value="UniProtKB"/>
</dbReference>
<dbReference type="GO" id="GO:0018394">
    <property type="term" value="P:peptidyl-lysine acetylation"/>
    <property type="evidence" value="ECO:0000314"/>
    <property type="project" value="UniProtKB"/>
</dbReference>
<dbReference type="CDD" id="cd04301">
    <property type="entry name" value="NAT_SF"/>
    <property type="match status" value="1"/>
</dbReference>
<dbReference type="Gene3D" id="3.40.630.30">
    <property type="match status" value="1"/>
</dbReference>
<dbReference type="InterPro" id="IPR016181">
    <property type="entry name" value="Acyl_CoA_acyltransferase"/>
</dbReference>
<dbReference type="InterPro" id="IPR000182">
    <property type="entry name" value="GNAT_dom"/>
</dbReference>
<dbReference type="PANTHER" id="PTHR47426">
    <property type="entry name" value="ACYL-COA N-ACYLTRANSFERASES (NAT) SUPERFAMILY PROTEIN"/>
    <property type="match status" value="1"/>
</dbReference>
<dbReference type="PANTHER" id="PTHR47426:SF3">
    <property type="entry name" value="GCN5-RELATED N-ACETYLTRANSFERASE 6, CHLOROPLASTIC"/>
    <property type="match status" value="1"/>
</dbReference>
<dbReference type="Pfam" id="PF00583">
    <property type="entry name" value="Acetyltransf_1"/>
    <property type="match status" value="1"/>
</dbReference>
<dbReference type="SUPFAM" id="SSF55729">
    <property type="entry name" value="Acyl-CoA N-acyltransferases (Nat)"/>
    <property type="match status" value="1"/>
</dbReference>
<dbReference type="PROSITE" id="PS51186">
    <property type="entry name" value="GNAT"/>
    <property type="match status" value="1"/>
</dbReference>